<proteinExistence type="inferred from homology"/>
<accession>B1XDD6</accession>
<evidence type="ECO:0000255" key="1">
    <source>
        <dbReference type="HAMAP-Rule" id="MF_01068"/>
    </source>
</evidence>
<reference key="1">
    <citation type="journal article" date="2008" name="J. Bacteriol.">
        <title>The complete genome sequence of Escherichia coli DH10B: insights into the biology of a laboratory workhorse.</title>
        <authorList>
            <person name="Durfee T."/>
            <person name="Nelson R."/>
            <person name="Baldwin S."/>
            <person name="Plunkett G. III"/>
            <person name="Burland V."/>
            <person name="Mau B."/>
            <person name="Petrosino J.F."/>
            <person name="Qin X."/>
            <person name="Muzny D.M."/>
            <person name="Ayele M."/>
            <person name="Gibbs R.A."/>
            <person name="Csorgo B."/>
            <person name="Posfai G."/>
            <person name="Weinstock G.M."/>
            <person name="Blattner F.R."/>
        </authorList>
    </citation>
    <scope>NUCLEOTIDE SEQUENCE [LARGE SCALE GENOMIC DNA]</scope>
    <source>
        <strain>K12 / DH10B</strain>
    </source>
</reference>
<gene>
    <name evidence="1" type="primary">mdoD</name>
    <name evidence="1" type="synonym">opgD</name>
    <name type="ordered locus">ECDH10B_1552</name>
</gene>
<keyword id="KW-0574">Periplasm</keyword>
<keyword id="KW-0732">Signal</keyword>
<name>OPGD_ECODH</name>
<protein>
    <recommendedName>
        <fullName evidence="1">Glucans biosynthesis protein D</fullName>
    </recommendedName>
</protein>
<organism>
    <name type="scientific">Escherichia coli (strain K12 / DH10B)</name>
    <dbReference type="NCBI Taxonomy" id="316385"/>
    <lineage>
        <taxon>Bacteria</taxon>
        <taxon>Pseudomonadati</taxon>
        <taxon>Pseudomonadota</taxon>
        <taxon>Gammaproteobacteria</taxon>
        <taxon>Enterobacterales</taxon>
        <taxon>Enterobacteriaceae</taxon>
        <taxon>Escherichia</taxon>
    </lineage>
</organism>
<dbReference type="EMBL" id="CP000948">
    <property type="protein sequence ID" value="ACB02641.1"/>
    <property type="molecule type" value="Genomic_DNA"/>
</dbReference>
<dbReference type="RefSeq" id="WP_000375961.1">
    <property type="nucleotide sequence ID" value="NC_010473.1"/>
</dbReference>
<dbReference type="SMR" id="B1XDD6"/>
<dbReference type="KEGG" id="ecd:ECDH10B_1552"/>
<dbReference type="HOGENOM" id="CLU_023403_2_0_6"/>
<dbReference type="UniPathway" id="UPA00637"/>
<dbReference type="GO" id="GO:0030288">
    <property type="term" value="C:outer membrane-bounded periplasmic space"/>
    <property type="evidence" value="ECO:0007669"/>
    <property type="project" value="TreeGrafter"/>
</dbReference>
<dbReference type="GO" id="GO:0030246">
    <property type="term" value="F:carbohydrate binding"/>
    <property type="evidence" value="ECO:0007669"/>
    <property type="project" value="InterPro"/>
</dbReference>
<dbReference type="GO" id="GO:0003824">
    <property type="term" value="F:catalytic activity"/>
    <property type="evidence" value="ECO:0007669"/>
    <property type="project" value="InterPro"/>
</dbReference>
<dbReference type="GO" id="GO:0051274">
    <property type="term" value="P:beta-glucan biosynthetic process"/>
    <property type="evidence" value="ECO:0007669"/>
    <property type="project" value="TreeGrafter"/>
</dbReference>
<dbReference type="FunFam" id="2.60.40.10:FF:000379">
    <property type="entry name" value="Glucans biosynthesis protein D"/>
    <property type="match status" value="1"/>
</dbReference>
<dbReference type="FunFam" id="2.70.98.10:FF:000004">
    <property type="entry name" value="Glucans biosynthesis protein D"/>
    <property type="match status" value="1"/>
</dbReference>
<dbReference type="Gene3D" id="2.70.98.10">
    <property type="match status" value="1"/>
</dbReference>
<dbReference type="Gene3D" id="2.60.40.10">
    <property type="entry name" value="Immunoglobulins"/>
    <property type="match status" value="1"/>
</dbReference>
<dbReference type="HAMAP" id="MF_01068">
    <property type="entry name" value="MdoD_OpgD"/>
    <property type="match status" value="1"/>
</dbReference>
<dbReference type="InterPro" id="IPR011013">
    <property type="entry name" value="Gal_mutarotase_sf_dom"/>
</dbReference>
<dbReference type="InterPro" id="IPR014718">
    <property type="entry name" value="GH-type_carb-bd"/>
</dbReference>
<dbReference type="InterPro" id="IPR023724">
    <property type="entry name" value="Glucan_biosyn_MdoD"/>
</dbReference>
<dbReference type="InterPro" id="IPR014438">
    <property type="entry name" value="Glucan_biosyn_MdoG/MdoD"/>
</dbReference>
<dbReference type="InterPro" id="IPR007444">
    <property type="entry name" value="Glucan_biosyn_MdoG_C"/>
</dbReference>
<dbReference type="InterPro" id="IPR013783">
    <property type="entry name" value="Ig-like_fold"/>
</dbReference>
<dbReference type="InterPro" id="IPR014756">
    <property type="entry name" value="Ig_E-set"/>
</dbReference>
<dbReference type="InterPro" id="IPR006311">
    <property type="entry name" value="TAT_signal"/>
</dbReference>
<dbReference type="InterPro" id="IPR019546">
    <property type="entry name" value="TAT_signal_bac_arc"/>
</dbReference>
<dbReference type="NCBIfam" id="TIGR01409">
    <property type="entry name" value="TAT_signal_seq"/>
    <property type="match status" value="1"/>
</dbReference>
<dbReference type="PANTHER" id="PTHR30504">
    <property type="entry name" value="GLUCANS BIOSYNTHESIS PROTEIN"/>
    <property type="match status" value="1"/>
</dbReference>
<dbReference type="PANTHER" id="PTHR30504:SF3">
    <property type="entry name" value="GLUCANS BIOSYNTHESIS PROTEIN D"/>
    <property type="match status" value="1"/>
</dbReference>
<dbReference type="Pfam" id="PF04349">
    <property type="entry name" value="MdoG"/>
    <property type="match status" value="1"/>
</dbReference>
<dbReference type="PIRSF" id="PIRSF006281">
    <property type="entry name" value="MdoG"/>
    <property type="match status" value="1"/>
</dbReference>
<dbReference type="SUPFAM" id="SSF81296">
    <property type="entry name" value="E set domains"/>
    <property type="match status" value="1"/>
</dbReference>
<dbReference type="SUPFAM" id="SSF74650">
    <property type="entry name" value="Galactose mutarotase-like"/>
    <property type="match status" value="1"/>
</dbReference>
<dbReference type="PROSITE" id="PS51318">
    <property type="entry name" value="TAT"/>
    <property type="match status" value="1"/>
</dbReference>
<comment type="function">
    <text evidence="1">Probably involved in the control of the structural glucose backbone of osmoregulated periplasmic glucans (OPGs).</text>
</comment>
<comment type="pathway">
    <text evidence="1">Glycan metabolism; osmoregulated periplasmic glucan (OPG) biosynthesis.</text>
</comment>
<comment type="subcellular location">
    <subcellularLocation>
        <location evidence="1">Periplasm</location>
    </subcellularLocation>
</comment>
<comment type="PTM">
    <text>Predicted to be exported by the Tat system. The position of the signal peptide cleavage has not been experimentally proven.</text>
</comment>
<comment type="similarity">
    <text evidence="1">Belongs to the OpgD/OpgG family.</text>
</comment>
<sequence length="551" mass="62758">MDRRRFIKGSMAMAAVCGTSGIASLFSQAAFAADSDIADGQTQRFDFSILQSMAHDLAQTAWRGAPRPLPDTLATMTPQAYNSIQYDAEKSLWHNVENRQLDAQFFHMGMGFRRRVRMFSVDPATHLAREIHFRPELFKYNDAGVDTKQLEGQSDLGFAGFRVFKAPELARRDVVSFLGASYFRAVDDTYQYGLSARGLAIDTYTDSKEEFPDFTAFWFDTVKPGATTFTVYALLDSASITGAYKFTIHCEKSQVIMDVENHLYARKDIKQLGIAPMTSMFSCGTNERRMCDTIHPQIHDSDRLSMWRGNGEWICRPLNNPQKLQFNAYTDNNPKGFGLLQLDRDFSHYQDIMGWYNKRPSLWVEPRNKWGKGTIGLMEIPTTGETLDNIVCFWQPEKAVKAGDEFAFQYRLYWSAQPPVHCPLARVMATRTGMGGFSEGWAPGEHYPEKWARRFAVDFVGGDLKAAAPKGIEPVITLSSGEAKQIEILYIEPIDGYRIQFDWYPTSDSTDPVDMRMYLRCQGDAISETWLYQYFPPAPDKRQYVDDRVMS</sequence>
<feature type="signal peptide" description="Tat-type signal" evidence="1">
    <location>
        <begin position="1"/>
        <end position="32"/>
    </location>
</feature>
<feature type="chain" id="PRO_1000136599" description="Glucans biosynthesis protein D">
    <location>
        <begin position="33"/>
        <end position="551"/>
    </location>
</feature>